<accession>P0DUE3</accession>
<proteinExistence type="evidence at protein level"/>
<organism>
    <name type="scientific">Lachnospiraceae bacterium (strain RUG226)</name>
    <dbReference type="NCBI Taxonomy" id="2778090"/>
    <lineage>
        <taxon>Bacteria</taxon>
        <taxon>Bacillati</taxon>
        <taxon>Bacillota</taxon>
        <taxon>Clostridia</taxon>
        <taxon>Lachnospirales</taxon>
        <taxon>Lachnospiraceae</taxon>
    </lineage>
</organism>
<gene>
    <name evidence="3" type="primary">cdnE</name>
    <name type="ORF">Ga0313508_15008</name>
    <name type="ORF">IMG 2800731184</name>
</gene>
<feature type="chain" id="PRO_0000451887" description="c-di-GMP synthase">
    <location>
        <begin position="1"/>
        <end position="346"/>
    </location>
</feature>
<keyword id="KW-0051">Antiviral defense</keyword>
<keyword id="KW-0342">GTP-binding</keyword>
<keyword id="KW-0547">Nucleotide-binding</keyword>
<keyword id="KW-0548">Nucleotidyltransferase</keyword>
<keyword id="KW-0808">Transferase</keyword>
<comment type="function">
    <text evidence="1 2 5">Cyclic nucleotide synthase (second messenger synthase) of a CBASS antivirus system (PubMed:32877915). CBASS (cyclic oligonucleotide-based antiphage signaling system) provides immunity against bacteriophage. The CD-NTase protein synthesizes cyclic nucleotides in response to infection; these serve as specific second messenger signals. The signals activate a diverse range of effectors, leading to bacterial cell death and thus abortive phage infection. A type I-D(GG) CBASS system (PubMed:32839535).</text>
</comment>
<comment type="function">
    <text evidence="1">Cyclic dinucleotide synthase that catalyzes the synthesis of c-di-GMP, has no activity with other NTP substrates.</text>
</comment>
<comment type="catalytic activity">
    <reaction evidence="1">
        <text>2 GTP = 3',3'-c-di-GMP + 2 diphosphate</text>
        <dbReference type="Rhea" id="RHEA:24898"/>
        <dbReference type="ChEBI" id="CHEBI:33019"/>
        <dbReference type="ChEBI" id="CHEBI:37565"/>
        <dbReference type="ChEBI" id="CHEBI:58805"/>
        <dbReference type="EC" id="2.7.7.65"/>
    </reaction>
</comment>
<comment type="miscellaneous">
    <text evidence="5">Bacteria with this enzyme do not have other c-di-GMP synthase enzymes (no GGDEF or EAL-domain containing proteins), suggesting this second messenger has been co-opted for CBASS signaling via STING activation.</text>
</comment>
<comment type="similarity">
    <text evidence="4">Belongs to the CD-NTase family.</text>
</comment>
<comment type="online information" name="IMG gene page for 2800731184">
    <link uri="https://img.jgi.doe.gov/cgi-bin/m/main.cgi?section=GeneDetail&amp;page=genePageMainFaa&amp;gene_oid=2800731184"/>
</comment>
<evidence type="ECO:0000269" key="1">
    <source>
    </source>
</evidence>
<evidence type="ECO:0000303" key="2">
    <source>
    </source>
</evidence>
<evidence type="ECO:0000303" key="3">
    <source>
    </source>
</evidence>
<evidence type="ECO:0000305" key="4"/>
<evidence type="ECO:0000305" key="5">
    <source>
    </source>
</evidence>
<reference key="1">
    <citation type="journal article" date="2020" name="Nature">
        <title>STING cyclic dinucleotide sensing originated in bacteria.</title>
        <authorList>
            <person name="Morehouse B.R."/>
            <person name="Govande A.A."/>
            <person name="Millman A."/>
            <person name="Keszei A.F.A."/>
            <person name="Lowey B."/>
            <person name="Ofir G."/>
            <person name="Shao S."/>
            <person name="Sorek R."/>
            <person name="Kranzusch P.J."/>
        </authorList>
    </citation>
    <scope>FUNCTION</scope>
    <scope>CATALYTIC ACTIVITY</scope>
    <scope>SUBSTRATE SPECIFICITY</scope>
</reference>
<reference key="2">
    <citation type="journal article" date="2020" name="Nat. Microbiol.">
        <title>Diversity and classification of cyclic-oligonucleotide-based anti-phage signalling systems.</title>
        <authorList>
            <person name="Millman A."/>
            <person name="Melamed S."/>
            <person name="Amitai G."/>
            <person name="Sorek R."/>
        </authorList>
    </citation>
    <scope>CLASSIFICATION AND NOMENCLATURE</scope>
</reference>
<name>CDNE_LACSX</name>
<sequence>MSSFDYRSRLKELSARYNPEASILVNERMQSEDHYLDTDVVRYVKRSMRAVDDDYTKRTKDAGEAVKQHLNNELINVTYEYQGSVMTNTHIKGASDIDLLVICEKFEDTEINRVRDCLKTPYGYSNIQLSRLRNYELSFSLYRGDSREDLSNLRRQIESIMISKYTICDISKAKSVRITNQHLHRDVDIVTSSWFQSLEYVLDGMPKEEKGIKIYNKNLGFAEGPDFPFLSISRINQKSSESNGRLKRMIRFLKNVRTDSQKDIQLTSFDINAICYSIPVADYAYLDYKQLVYLLWSTMYHLWYDNKLDKLKSVVGDEYVFKGKPNKIEALKALEDDVFKIHQDLN</sequence>
<protein>
    <recommendedName>
        <fullName evidence="3">c-di-GMP synthase</fullName>
        <ecNumber evidence="1">2.7.7.65</ecNumber>
    </recommendedName>
    <alternativeName>
        <fullName evidence="3">LbCdnE</fullName>
    </alternativeName>
    <alternativeName>
        <fullName>cGAS/DncV-like nucleotidyltransferase</fullName>
        <shortName>CD-NTase</shortName>
    </alternativeName>
</protein>
<dbReference type="EC" id="2.7.7.65" evidence="1"/>
<dbReference type="SMR" id="P0DUE3"/>
<dbReference type="GO" id="GO:0052621">
    <property type="term" value="F:diguanylate cyclase activity"/>
    <property type="evidence" value="ECO:0007669"/>
    <property type="project" value="UniProtKB-EC"/>
</dbReference>
<dbReference type="GO" id="GO:0005525">
    <property type="term" value="F:GTP binding"/>
    <property type="evidence" value="ECO:0007669"/>
    <property type="project" value="UniProtKB-KW"/>
</dbReference>
<dbReference type="GO" id="GO:0051607">
    <property type="term" value="P:defense response to virus"/>
    <property type="evidence" value="ECO:0007669"/>
    <property type="project" value="UniProtKB-KW"/>
</dbReference>
<dbReference type="Gene3D" id="3.30.460.10">
    <property type="entry name" value="Beta Polymerase, domain 2"/>
    <property type="match status" value="1"/>
</dbReference>
<dbReference type="InterPro" id="IPR043519">
    <property type="entry name" value="NT_sf"/>
</dbReference>
<dbReference type="SUPFAM" id="SSF81301">
    <property type="entry name" value="Nucleotidyltransferase"/>
    <property type="match status" value="1"/>
</dbReference>